<comment type="function">
    <text evidence="1">Putative oxidoreductase.</text>
</comment>
<comment type="alternative products">
    <event type="alternative splicing"/>
    <isoform>
        <id>A0PJE2-1</id>
        <name>1</name>
        <sequence type="displayed"/>
    </isoform>
    <isoform>
        <id>A0PJE2-2</id>
        <name>2</name>
        <sequence type="described" ref="VSP_029724 VSP_029726 VSP_029727"/>
    </isoform>
    <isoform>
        <id>A0PJE2-3</id>
        <name>3</name>
        <sequence type="described" ref="VSP_029724 VSP_029725"/>
    </isoform>
    <isoform>
        <id>A0PJE2-4</id>
        <name>4</name>
        <sequence type="described" ref="VSP_029724"/>
    </isoform>
</comment>
<comment type="similarity">
    <text evidence="6">Belongs to the short-chain dehydrogenases/reductases (SDR) family.</text>
</comment>
<accession>A0PJE2</accession>
<accession>Q96GB2</accession>
<accession>Q9H8H1</accession>
<keyword id="KW-0025">Alternative splicing</keyword>
<keyword id="KW-0520">NAD</keyword>
<keyword id="KW-0521">NADP</keyword>
<keyword id="KW-0560">Oxidoreductase</keyword>
<keyword id="KW-1267">Proteomics identification</keyword>
<keyword id="KW-1185">Reference proteome</keyword>
<sequence length="317" mass="35146">MSLYRSVVWFAKGLREYTKSGYESACKDFVPHDLEVQIPGRVFLVTGGNSGIGKATALEIAKRGGTVHLVCRDQAPAEDARGEIIRESGNQNIFLHIVDLSDPKQIWKFVENFKQEHKLHVLINNAGCMVNKRELTEDGLEKNFAANTLGVYILTTGLIPVLEKEHDPRVITVSSGGMLVQKLNTNDLQSERTPFDGTMVYAQNKRQQVVLTERWAQGHPAIHFSSMHPGWADTPGVRQAMPGFHARFGDRLRSEAQGADTMLWLALSSAAAAQPSGRFFQDRKPVSTHLPLATASSSPAEEEKLIEILEQLAQTFK</sequence>
<evidence type="ECO:0000250" key="1"/>
<evidence type="ECO:0000250" key="2">
    <source>
        <dbReference type="UniProtKB" id="Q99714"/>
    </source>
</evidence>
<evidence type="ECO:0000303" key="3">
    <source>
    </source>
</evidence>
<evidence type="ECO:0000303" key="4">
    <source>
    </source>
</evidence>
<evidence type="ECO:0000303" key="5">
    <source>
    </source>
</evidence>
<evidence type="ECO:0000305" key="6"/>
<evidence type="ECO:0000312" key="7">
    <source>
        <dbReference type="HGNC" id="HGNC:25832"/>
    </source>
</evidence>
<dbReference type="EC" id="1.1.-.-" evidence="6"/>
<dbReference type="EMBL" id="AK023701">
    <property type="protein sequence ID" value="BAB14646.1"/>
    <property type="molecule type" value="mRNA"/>
</dbReference>
<dbReference type="EMBL" id="AL136525">
    <property type="status" value="NOT_ANNOTATED_CDS"/>
    <property type="molecule type" value="Genomic_DNA"/>
</dbReference>
<dbReference type="EMBL" id="AL162377">
    <property type="status" value="NOT_ANNOTATED_CDS"/>
    <property type="molecule type" value="Genomic_DNA"/>
</dbReference>
<dbReference type="EMBL" id="CH471075">
    <property type="protein sequence ID" value="EAX08884.1"/>
    <property type="molecule type" value="Genomic_DNA"/>
</dbReference>
<dbReference type="EMBL" id="CH471075">
    <property type="protein sequence ID" value="EAX08888.1"/>
    <property type="molecule type" value="Genomic_DNA"/>
</dbReference>
<dbReference type="EMBL" id="BC009825">
    <property type="protein sequence ID" value="AAH09825.1"/>
    <property type="molecule type" value="mRNA"/>
</dbReference>
<dbReference type="EMBL" id="BC026024">
    <property type="protein sequence ID" value="AAH26024.1"/>
    <property type="molecule type" value="mRNA"/>
</dbReference>
<dbReference type="CCDS" id="CCDS31976.1">
    <molecule id="A0PJE2-3"/>
</dbReference>
<dbReference type="CCDS" id="CCDS58292.1">
    <molecule id="A0PJE2-1"/>
</dbReference>
<dbReference type="CCDS" id="CCDS91809.1">
    <molecule id="A0PJE2-4"/>
</dbReference>
<dbReference type="CCDS" id="CCDS9430.1">
    <molecule id="A0PJE2-2"/>
</dbReference>
<dbReference type="RefSeq" id="NP_001026889.1">
    <molecule id="A0PJE2-3"/>
    <property type="nucleotide sequence ID" value="NM_001031719.3"/>
</dbReference>
<dbReference type="RefSeq" id="NP_001257353.1">
    <molecule id="A0PJE2-1"/>
    <property type="nucleotide sequence ID" value="NM_001270424.1"/>
</dbReference>
<dbReference type="RefSeq" id="NP_001364462.1">
    <molecule id="A0PJE2-4"/>
    <property type="nucleotide sequence ID" value="NM_001377533.1"/>
</dbReference>
<dbReference type="RefSeq" id="NP_078981.1">
    <molecule id="A0PJE2-2"/>
    <property type="nucleotide sequence ID" value="NM_024705.2"/>
</dbReference>
<dbReference type="SMR" id="A0PJE2"/>
<dbReference type="BioGRID" id="122867">
    <property type="interactions" value="20"/>
</dbReference>
<dbReference type="FunCoup" id="A0PJE2">
    <property type="interactions" value="16"/>
</dbReference>
<dbReference type="IntAct" id="A0PJE2">
    <property type="interactions" value="15"/>
</dbReference>
<dbReference type="STRING" id="9606.ENSP00000411565"/>
<dbReference type="BioMuta" id="DHRS12"/>
<dbReference type="MassIVE" id="A0PJE2"/>
<dbReference type="PaxDb" id="9606-ENSP00000411565"/>
<dbReference type="PeptideAtlas" id="A0PJE2"/>
<dbReference type="ProteomicsDB" id="54">
    <molecule id="A0PJE2-1"/>
</dbReference>
<dbReference type="ProteomicsDB" id="55">
    <molecule id="A0PJE2-2"/>
</dbReference>
<dbReference type="ProteomicsDB" id="56">
    <molecule id="A0PJE2-3"/>
</dbReference>
<dbReference type="Antibodypedia" id="42326">
    <property type="antibodies" value="58 antibodies from 14 providers"/>
</dbReference>
<dbReference type="DNASU" id="79758"/>
<dbReference type="Ensembl" id="ENST00000218981.5">
    <molecule id="A0PJE2-2"/>
    <property type="protein sequence ID" value="ENSP00000218981.1"/>
    <property type="gene ID" value="ENSG00000102796.12"/>
</dbReference>
<dbReference type="Ensembl" id="ENST00000280056.6">
    <molecule id="A0PJE2-3"/>
    <property type="protein sequence ID" value="ENSP00000280056.2"/>
    <property type="gene ID" value="ENSG00000102796.12"/>
</dbReference>
<dbReference type="Ensembl" id="ENST00000444610.8">
    <molecule id="A0PJE2-4"/>
    <property type="protein sequence ID" value="ENSP00000411565.3"/>
    <property type="gene ID" value="ENSG00000102796.12"/>
</dbReference>
<dbReference type="Ensembl" id="ENST00000682342.2">
    <molecule id="A0PJE2-1"/>
    <property type="protein sequence ID" value="ENSP00000507480.2"/>
    <property type="gene ID" value="ENSG00000102796.12"/>
</dbReference>
<dbReference type="GeneID" id="79758"/>
<dbReference type="KEGG" id="hsa:79758"/>
<dbReference type="MANE-Select" id="ENST00000444610.8">
    <molecule id="A0PJE2-4"/>
    <property type="protein sequence ID" value="ENSP00000411565.3"/>
    <property type="RefSeq nucleotide sequence ID" value="NM_001377533.1"/>
    <property type="RefSeq protein sequence ID" value="NP_001364462.1"/>
</dbReference>
<dbReference type="UCSC" id="uc001vfq.5">
    <molecule id="A0PJE2-1"/>
    <property type="organism name" value="human"/>
</dbReference>
<dbReference type="AGR" id="HGNC:25832"/>
<dbReference type="CTD" id="79758"/>
<dbReference type="DisGeNET" id="79758"/>
<dbReference type="GeneCards" id="DHRS12"/>
<dbReference type="HGNC" id="HGNC:25832">
    <property type="gene designation" value="DHRS12"/>
</dbReference>
<dbReference type="HPA" id="ENSG00000102796">
    <property type="expression patterns" value="Tissue enhanced (pancreas)"/>
</dbReference>
<dbReference type="MIM" id="616163">
    <property type="type" value="gene"/>
</dbReference>
<dbReference type="neXtProt" id="NX_A0PJE2"/>
<dbReference type="OpenTargets" id="ENSG00000102796"/>
<dbReference type="PharmGKB" id="PA147358124"/>
<dbReference type="VEuPathDB" id="HostDB:ENSG00000102796"/>
<dbReference type="eggNOG" id="KOG1208">
    <property type="taxonomic scope" value="Eukaryota"/>
</dbReference>
<dbReference type="GeneTree" id="ENSGT00940000163782"/>
<dbReference type="HOGENOM" id="CLU_010194_44_8_1"/>
<dbReference type="InParanoid" id="A0PJE2"/>
<dbReference type="OMA" id="TYIMTTA"/>
<dbReference type="OrthoDB" id="417891at2759"/>
<dbReference type="PAN-GO" id="A0PJE2">
    <property type="GO annotations" value="0 GO annotations based on evolutionary models"/>
</dbReference>
<dbReference type="PhylomeDB" id="A0PJE2"/>
<dbReference type="TreeFam" id="TF353029"/>
<dbReference type="PathwayCommons" id="A0PJE2"/>
<dbReference type="BioGRID-ORCS" id="79758">
    <property type="hits" value="13 hits in 1154 CRISPR screens"/>
</dbReference>
<dbReference type="ChiTaRS" id="DHRS12">
    <property type="organism name" value="human"/>
</dbReference>
<dbReference type="GenomeRNAi" id="79758"/>
<dbReference type="Pharos" id="A0PJE2">
    <property type="development level" value="Tdark"/>
</dbReference>
<dbReference type="PRO" id="PR:A0PJE2"/>
<dbReference type="Proteomes" id="UP000005640">
    <property type="component" value="Chromosome 13"/>
</dbReference>
<dbReference type="RNAct" id="A0PJE2">
    <property type="molecule type" value="protein"/>
</dbReference>
<dbReference type="Bgee" id="ENSG00000102796">
    <property type="expression patterns" value="Expressed in body of pancreas and 97 other cell types or tissues"/>
</dbReference>
<dbReference type="ExpressionAtlas" id="A0PJE2">
    <property type="expression patterns" value="baseline and differential"/>
</dbReference>
<dbReference type="GO" id="GO:0016491">
    <property type="term" value="F:oxidoreductase activity"/>
    <property type="evidence" value="ECO:0007669"/>
    <property type="project" value="UniProtKB-KW"/>
</dbReference>
<dbReference type="CDD" id="cd09808">
    <property type="entry name" value="DHRS-12_like_SDR_c-like"/>
    <property type="match status" value="1"/>
</dbReference>
<dbReference type="Gene3D" id="3.40.50.720">
    <property type="entry name" value="NAD(P)-binding Rossmann-like Domain"/>
    <property type="match status" value="1"/>
</dbReference>
<dbReference type="InterPro" id="IPR036291">
    <property type="entry name" value="NAD(P)-bd_dom_sf"/>
</dbReference>
<dbReference type="InterPro" id="IPR002347">
    <property type="entry name" value="SDR_fam"/>
</dbReference>
<dbReference type="InterPro" id="IPR052992">
    <property type="entry name" value="SDR_member_12"/>
</dbReference>
<dbReference type="PANTHER" id="PTHR44656">
    <property type="entry name" value="DEHYDROGENASE/REDUCTASE SDR FAMILY MEMBER 12"/>
    <property type="match status" value="1"/>
</dbReference>
<dbReference type="PANTHER" id="PTHR44656:SF7">
    <property type="entry name" value="DEHYDROGENASE_REDUCTASE SDR FAMILY MEMBER 12"/>
    <property type="match status" value="1"/>
</dbReference>
<dbReference type="Pfam" id="PF00106">
    <property type="entry name" value="adh_short"/>
    <property type="match status" value="1"/>
</dbReference>
<dbReference type="PRINTS" id="PR00081">
    <property type="entry name" value="GDHRDH"/>
</dbReference>
<dbReference type="SUPFAM" id="SSF51735">
    <property type="entry name" value="NAD(P)-binding Rossmann-fold domains"/>
    <property type="match status" value="1"/>
</dbReference>
<name>DHR12_HUMAN</name>
<organism>
    <name type="scientific">Homo sapiens</name>
    <name type="common">Human</name>
    <dbReference type="NCBI Taxonomy" id="9606"/>
    <lineage>
        <taxon>Eukaryota</taxon>
        <taxon>Metazoa</taxon>
        <taxon>Chordata</taxon>
        <taxon>Craniata</taxon>
        <taxon>Vertebrata</taxon>
        <taxon>Euteleostomi</taxon>
        <taxon>Mammalia</taxon>
        <taxon>Eutheria</taxon>
        <taxon>Euarchontoglires</taxon>
        <taxon>Primates</taxon>
        <taxon>Haplorrhini</taxon>
        <taxon>Catarrhini</taxon>
        <taxon>Hominidae</taxon>
        <taxon>Homo</taxon>
    </lineage>
</organism>
<proteinExistence type="evidence at protein level"/>
<feature type="chain" id="PRO_0000312175" description="Dehydrogenase/reductase SDR family member 12">
    <location>
        <begin position="1"/>
        <end position="317"/>
    </location>
</feature>
<feature type="active site" description="Proton acceptor" evidence="2">
    <location>
        <position position="201"/>
    </location>
</feature>
<feature type="binding site" evidence="2">
    <location>
        <position position="50"/>
    </location>
    <ligand>
        <name>NAD(+)</name>
        <dbReference type="ChEBI" id="CHEBI:57540"/>
    </ligand>
</feature>
<feature type="binding site" evidence="2">
    <location>
        <position position="52"/>
    </location>
    <ligand>
        <name>NAD(+)</name>
        <dbReference type="ChEBI" id="CHEBI:57540"/>
    </ligand>
</feature>
<feature type="binding site" evidence="2">
    <location>
        <position position="175"/>
    </location>
    <ligand>
        <name>substrate</name>
    </ligand>
</feature>
<feature type="binding site" evidence="2">
    <location>
        <position position="201"/>
    </location>
    <ligand>
        <name>NAD(+)</name>
        <dbReference type="ChEBI" id="CHEBI:57540"/>
    </ligand>
</feature>
<feature type="binding site" evidence="2">
    <location>
        <position position="205"/>
    </location>
    <ligand>
        <name>NAD(+)</name>
        <dbReference type="ChEBI" id="CHEBI:57540"/>
    </ligand>
</feature>
<feature type="binding site" evidence="2">
    <location>
        <position position="234"/>
    </location>
    <ligand>
        <name>NAD(+)</name>
        <dbReference type="ChEBI" id="CHEBI:57540"/>
    </ligand>
</feature>
<feature type="splice variant" id="VSP_029724" description="In isoform 2, isoform 3 and isoform 4." evidence="3 4">
    <original>MSLYRSVVWFAKGLREYTKSGYESACKDFVPHDLEVQIPGRVFLVTGGNSGIGKATALEIAKRGGTVHLVCRDQAPAEDARGEIIRESGNQ</original>
    <variation>MNLHVKTLSLMTWRSRFLEESFWSLEETAALAKQLPLKSPSE</variation>
    <location>
        <begin position="1"/>
        <end position="91"/>
    </location>
</feature>
<feature type="splice variant" id="VSP_029725" description="In isoform 3." evidence="4">
    <original>GVRQAMPGFHARFGDRLRSEAQGADTMLWLALSSAAAAQPSGRFFQDRKPVSTHLPLATASSSPAEEEKLIEILEQLAQTFK</original>
    <variation>DRNEQELRKVVGEAQTASPLPRFLEIMMHEGKCQPQGHSSNDLEACWSSGGGEQNSLPDWPHQLHDLRQLTWALCSSFLLYKQGN</variation>
    <location>
        <begin position="236"/>
        <end position="317"/>
    </location>
</feature>
<feature type="splice variant" id="VSP_029726" description="In isoform 2." evidence="3">
    <original>DRKPVSTHLPLATAS</original>
    <variation>GDFLPGCEGS</variation>
    <location>
        <begin position="282"/>
        <end position="296"/>
    </location>
</feature>
<feature type="splice variant" id="VSP_029727" description="In isoform 2." evidence="3">
    <location>
        <begin position="297"/>
        <end position="317"/>
    </location>
</feature>
<reference key="1">
    <citation type="journal article" date="2004" name="Nat. Genet.">
        <title>Complete sequencing and characterization of 21,243 full-length human cDNAs.</title>
        <authorList>
            <person name="Ota T."/>
            <person name="Suzuki Y."/>
            <person name="Nishikawa T."/>
            <person name="Otsuki T."/>
            <person name="Sugiyama T."/>
            <person name="Irie R."/>
            <person name="Wakamatsu A."/>
            <person name="Hayashi K."/>
            <person name="Sato H."/>
            <person name="Nagai K."/>
            <person name="Kimura K."/>
            <person name="Makita H."/>
            <person name="Sekine M."/>
            <person name="Obayashi M."/>
            <person name="Nishi T."/>
            <person name="Shibahara T."/>
            <person name="Tanaka T."/>
            <person name="Ishii S."/>
            <person name="Yamamoto J."/>
            <person name="Saito K."/>
            <person name="Kawai Y."/>
            <person name="Isono Y."/>
            <person name="Nakamura Y."/>
            <person name="Nagahari K."/>
            <person name="Murakami K."/>
            <person name="Yasuda T."/>
            <person name="Iwayanagi T."/>
            <person name="Wagatsuma M."/>
            <person name="Shiratori A."/>
            <person name="Sudo H."/>
            <person name="Hosoiri T."/>
            <person name="Kaku Y."/>
            <person name="Kodaira H."/>
            <person name="Kondo H."/>
            <person name="Sugawara M."/>
            <person name="Takahashi M."/>
            <person name="Kanda K."/>
            <person name="Yokoi T."/>
            <person name="Furuya T."/>
            <person name="Kikkawa E."/>
            <person name="Omura Y."/>
            <person name="Abe K."/>
            <person name="Kamihara K."/>
            <person name="Katsuta N."/>
            <person name="Sato K."/>
            <person name="Tanikawa M."/>
            <person name="Yamazaki M."/>
            <person name="Ninomiya K."/>
            <person name="Ishibashi T."/>
            <person name="Yamashita H."/>
            <person name="Murakawa K."/>
            <person name="Fujimori K."/>
            <person name="Tanai H."/>
            <person name="Kimata M."/>
            <person name="Watanabe M."/>
            <person name="Hiraoka S."/>
            <person name="Chiba Y."/>
            <person name="Ishida S."/>
            <person name="Ono Y."/>
            <person name="Takiguchi S."/>
            <person name="Watanabe S."/>
            <person name="Yosida M."/>
            <person name="Hotuta T."/>
            <person name="Kusano J."/>
            <person name="Kanehori K."/>
            <person name="Takahashi-Fujii A."/>
            <person name="Hara H."/>
            <person name="Tanase T.-O."/>
            <person name="Nomura Y."/>
            <person name="Togiya S."/>
            <person name="Komai F."/>
            <person name="Hara R."/>
            <person name="Takeuchi K."/>
            <person name="Arita M."/>
            <person name="Imose N."/>
            <person name="Musashino K."/>
            <person name="Yuuki H."/>
            <person name="Oshima A."/>
            <person name="Sasaki N."/>
            <person name="Aotsuka S."/>
            <person name="Yoshikawa Y."/>
            <person name="Matsunawa H."/>
            <person name="Ichihara T."/>
            <person name="Shiohata N."/>
            <person name="Sano S."/>
            <person name="Moriya S."/>
            <person name="Momiyama H."/>
            <person name="Satoh N."/>
            <person name="Takami S."/>
            <person name="Terashima Y."/>
            <person name="Suzuki O."/>
            <person name="Nakagawa S."/>
            <person name="Senoh A."/>
            <person name="Mizoguchi H."/>
            <person name="Goto Y."/>
            <person name="Shimizu F."/>
            <person name="Wakebe H."/>
            <person name="Hishigaki H."/>
            <person name="Watanabe T."/>
            <person name="Sugiyama A."/>
            <person name="Takemoto M."/>
            <person name="Kawakami B."/>
            <person name="Yamazaki M."/>
            <person name="Watanabe K."/>
            <person name="Kumagai A."/>
            <person name="Itakura S."/>
            <person name="Fukuzumi Y."/>
            <person name="Fujimori Y."/>
            <person name="Komiyama M."/>
            <person name="Tashiro H."/>
            <person name="Tanigami A."/>
            <person name="Fujiwara T."/>
            <person name="Ono T."/>
            <person name="Yamada K."/>
            <person name="Fujii Y."/>
            <person name="Ozaki K."/>
            <person name="Hirao M."/>
            <person name="Ohmori Y."/>
            <person name="Kawabata A."/>
            <person name="Hikiji T."/>
            <person name="Kobatake N."/>
            <person name="Inagaki H."/>
            <person name="Ikema Y."/>
            <person name="Okamoto S."/>
            <person name="Okitani R."/>
            <person name="Kawakami T."/>
            <person name="Noguchi S."/>
            <person name="Itoh T."/>
            <person name="Shigeta K."/>
            <person name="Senba T."/>
            <person name="Matsumura K."/>
            <person name="Nakajima Y."/>
            <person name="Mizuno T."/>
            <person name="Morinaga M."/>
            <person name="Sasaki M."/>
            <person name="Togashi T."/>
            <person name="Oyama M."/>
            <person name="Hata H."/>
            <person name="Watanabe M."/>
            <person name="Komatsu T."/>
            <person name="Mizushima-Sugano J."/>
            <person name="Satoh T."/>
            <person name="Shirai Y."/>
            <person name="Takahashi Y."/>
            <person name="Nakagawa K."/>
            <person name="Okumura K."/>
            <person name="Nagase T."/>
            <person name="Nomura N."/>
            <person name="Kikuchi H."/>
            <person name="Masuho Y."/>
            <person name="Yamashita R."/>
            <person name="Nakai K."/>
            <person name="Yada T."/>
            <person name="Nakamura Y."/>
            <person name="Ohara O."/>
            <person name="Isogai T."/>
            <person name="Sugano S."/>
        </authorList>
    </citation>
    <scope>NUCLEOTIDE SEQUENCE [LARGE SCALE MRNA] (ISOFORM 2)</scope>
    <source>
        <tissue>Placenta</tissue>
    </source>
</reference>
<reference key="2">
    <citation type="journal article" date="2004" name="Nature">
        <title>The DNA sequence and analysis of human chromosome 13.</title>
        <authorList>
            <person name="Dunham A."/>
            <person name="Matthews L.H."/>
            <person name="Burton J."/>
            <person name="Ashurst J.L."/>
            <person name="Howe K.L."/>
            <person name="Ashcroft K.J."/>
            <person name="Beare D.M."/>
            <person name="Burford D.C."/>
            <person name="Hunt S.E."/>
            <person name="Griffiths-Jones S."/>
            <person name="Jones M.C."/>
            <person name="Keenan S.J."/>
            <person name="Oliver K."/>
            <person name="Scott C.E."/>
            <person name="Ainscough R."/>
            <person name="Almeida J.P."/>
            <person name="Ambrose K.D."/>
            <person name="Andrews D.T."/>
            <person name="Ashwell R.I.S."/>
            <person name="Babbage A.K."/>
            <person name="Bagguley C.L."/>
            <person name="Bailey J."/>
            <person name="Bannerjee R."/>
            <person name="Barlow K.F."/>
            <person name="Bates K."/>
            <person name="Beasley H."/>
            <person name="Bird C.P."/>
            <person name="Bray-Allen S."/>
            <person name="Brown A.J."/>
            <person name="Brown J.Y."/>
            <person name="Burrill W."/>
            <person name="Carder C."/>
            <person name="Carter N.P."/>
            <person name="Chapman J.C."/>
            <person name="Clamp M.E."/>
            <person name="Clark S.Y."/>
            <person name="Clarke G."/>
            <person name="Clee C.M."/>
            <person name="Clegg S.C."/>
            <person name="Cobley V."/>
            <person name="Collins J.E."/>
            <person name="Corby N."/>
            <person name="Coville G.J."/>
            <person name="Deloukas P."/>
            <person name="Dhami P."/>
            <person name="Dunham I."/>
            <person name="Dunn M."/>
            <person name="Earthrowl M.E."/>
            <person name="Ellington A.G."/>
            <person name="Faulkner L."/>
            <person name="Frankish A.G."/>
            <person name="Frankland J."/>
            <person name="French L."/>
            <person name="Garner P."/>
            <person name="Garnett J."/>
            <person name="Gilbert J.G.R."/>
            <person name="Gilson C.J."/>
            <person name="Ghori J."/>
            <person name="Grafham D.V."/>
            <person name="Gribble S.M."/>
            <person name="Griffiths C."/>
            <person name="Hall R.E."/>
            <person name="Hammond S."/>
            <person name="Harley J.L."/>
            <person name="Hart E.A."/>
            <person name="Heath P.D."/>
            <person name="Howden P.J."/>
            <person name="Huckle E.J."/>
            <person name="Hunt P.J."/>
            <person name="Hunt A.R."/>
            <person name="Johnson C."/>
            <person name="Johnson D."/>
            <person name="Kay M."/>
            <person name="Kimberley A.M."/>
            <person name="King A."/>
            <person name="Laird G.K."/>
            <person name="Langford C.J."/>
            <person name="Lawlor S."/>
            <person name="Leongamornlert D.A."/>
            <person name="Lloyd D.M."/>
            <person name="Lloyd C."/>
            <person name="Loveland J.E."/>
            <person name="Lovell J."/>
            <person name="Martin S."/>
            <person name="Mashreghi-Mohammadi M."/>
            <person name="McLaren S.J."/>
            <person name="McMurray A."/>
            <person name="Milne S."/>
            <person name="Moore M.J.F."/>
            <person name="Nickerson T."/>
            <person name="Palmer S.A."/>
            <person name="Pearce A.V."/>
            <person name="Peck A.I."/>
            <person name="Pelan S."/>
            <person name="Phillimore B."/>
            <person name="Porter K.M."/>
            <person name="Rice C.M."/>
            <person name="Searle S."/>
            <person name="Sehra H.K."/>
            <person name="Shownkeen R."/>
            <person name="Skuce C.D."/>
            <person name="Smith M."/>
            <person name="Steward C.A."/>
            <person name="Sycamore N."/>
            <person name="Tester J."/>
            <person name="Thomas D.W."/>
            <person name="Tracey A."/>
            <person name="Tromans A."/>
            <person name="Tubby B."/>
            <person name="Wall M."/>
            <person name="Wallis J.M."/>
            <person name="West A.P."/>
            <person name="Whitehead S.L."/>
            <person name="Willey D.L."/>
            <person name="Wilming L."/>
            <person name="Wray P.W."/>
            <person name="Wright M.W."/>
            <person name="Young L."/>
            <person name="Coulson A."/>
            <person name="Durbin R.M."/>
            <person name="Hubbard T."/>
            <person name="Sulston J.E."/>
            <person name="Beck S."/>
            <person name="Bentley D.R."/>
            <person name="Rogers J."/>
            <person name="Ross M.T."/>
        </authorList>
    </citation>
    <scope>NUCLEOTIDE SEQUENCE [LARGE SCALE GENOMIC DNA]</scope>
    <scope>ALTERNATIVE SPLICING</scope>
</reference>
<reference key="3">
    <citation type="submission" date="2005-07" db="EMBL/GenBank/DDBJ databases">
        <authorList>
            <person name="Mural R.J."/>
            <person name="Istrail S."/>
            <person name="Sutton G.G."/>
            <person name="Florea L."/>
            <person name="Halpern A.L."/>
            <person name="Mobarry C.M."/>
            <person name="Lippert R."/>
            <person name="Walenz B."/>
            <person name="Shatkay H."/>
            <person name="Dew I."/>
            <person name="Miller J.R."/>
            <person name="Flanigan M.J."/>
            <person name="Edwards N.J."/>
            <person name="Bolanos R."/>
            <person name="Fasulo D."/>
            <person name="Halldorsson B.V."/>
            <person name="Hannenhalli S."/>
            <person name="Turner R."/>
            <person name="Yooseph S."/>
            <person name="Lu F."/>
            <person name="Nusskern D.R."/>
            <person name="Shue B.C."/>
            <person name="Zheng X.H."/>
            <person name="Zhong F."/>
            <person name="Delcher A.L."/>
            <person name="Huson D.H."/>
            <person name="Kravitz S.A."/>
            <person name="Mouchard L."/>
            <person name="Reinert K."/>
            <person name="Remington K.A."/>
            <person name="Clark A.G."/>
            <person name="Waterman M.S."/>
            <person name="Eichler E.E."/>
            <person name="Adams M.D."/>
            <person name="Hunkapiller M.W."/>
            <person name="Myers E.W."/>
            <person name="Venter J.C."/>
        </authorList>
    </citation>
    <scope>NUCLEOTIDE SEQUENCE [LARGE SCALE GENOMIC DNA]</scope>
</reference>
<reference key="4">
    <citation type="journal article" date="2004" name="Genome Res.">
        <title>The status, quality, and expansion of the NIH full-length cDNA project: the Mammalian Gene Collection (MGC).</title>
        <authorList>
            <consortium name="The MGC Project Team"/>
        </authorList>
    </citation>
    <scope>NUCLEOTIDE SEQUENCE [LARGE SCALE MRNA] (ISOFORM 3)</scope>
    <scope>NUCLEOTIDE SEQUENCE [LARGE SCALE MRNA] OF 6-317 (ISOFORM 1)</scope>
    <source>
        <tissue>Kidney</tissue>
        <tissue>Lung</tissue>
    </source>
</reference>
<reference key="5">
    <citation type="journal article" date="2009" name="Chem. Biol. Interact.">
        <title>The SDR (short-chain dehydrogenase/reductase and related enzymes) nomenclature initiative.</title>
        <authorList>
            <person name="Persson B."/>
            <person name="Kallberg Y."/>
            <person name="Bray J.E."/>
            <person name="Bruford E."/>
            <person name="Dellaporta S.L."/>
            <person name="Favia A.D."/>
            <person name="Duarte R.G."/>
            <person name="Joernvall H."/>
            <person name="Kavanagh K.L."/>
            <person name="Kedishvili N."/>
            <person name="Kisiela M."/>
            <person name="Maser E."/>
            <person name="Mindnich R."/>
            <person name="Orchard S."/>
            <person name="Penning T.M."/>
            <person name="Thornton J.M."/>
            <person name="Adamski J."/>
            <person name="Oppermann U."/>
        </authorList>
    </citation>
    <scope>GENE FAMILY</scope>
    <scope>NOMENCLATURE</scope>
</reference>
<protein>
    <recommendedName>
        <fullName evidence="5">Dehydrogenase/reductase SDR family member 12</fullName>
        <ecNumber evidence="6">1.1.-.-</ecNumber>
    </recommendedName>
    <alternativeName>
        <fullName evidence="5">Short-chain dehydrogenase/reductase family 40C member 1</fullName>
        <shortName evidence="5">Protein SDR40C1</shortName>
    </alternativeName>
</protein>
<gene>
    <name evidence="7" type="primary">DHRS12</name>
    <name evidence="5" type="synonym">SDR40C1</name>
</gene>